<dbReference type="EMBL" id="AB042889">
    <property type="protein sequence ID" value="BAB03506.1"/>
    <property type="molecule type" value="mRNA"/>
</dbReference>
<dbReference type="EMBL" id="AF181552">
    <property type="protein sequence ID" value="AAG09436.2"/>
    <property type="molecule type" value="mRNA"/>
</dbReference>
<dbReference type="RefSeq" id="NP_064485.2">
    <property type="nucleotide sequence ID" value="NM_020100.2"/>
</dbReference>
<dbReference type="SMR" id="Q9JJ73"/>
<dbReference type="ComplexPortal" id="CPX-245">
    <property type="entry name" value="Adrenomedullin receptor AM2 complex"/>
</dbReference>
<dbReference type="ComplexPortal" id="CPX-249">
    <property type="entry name" value="Amylin receptor 3 complex"/>
</dbReference>
<dbReference type="FunCoup" id="Q9JJ73">
    <property type="interactions" value="17"/>
</dbReference>
<dbReference type="STRING" id="10116.ENSRNOP00000074204"/>
<dbReference type="ChEMBL" id="CHEMBL2109235"/>
<dbReference type="GuidetoPHARMACOLOGY" id="53"/>
<dbReference type="GlyCosmos" id="Q9JJ73">
    <property type="glycosylation" value="4 sites, No reported glycans"/>
</dbReference>
<dbReference type="GlyGen" id="Q9JJ73">
    <property type="glycosylation" value="4 sites"/>
</dbReference>
<dbReference type="PhosphoSitePlus" id="Q9JJ73"/>
<dbReference type="PaxDb" id="10116-ENSRNOP00000010866"/>
<dbReference type="Ensembl" id="ENSRNOT00000086468.2">
    <property type="protein sequence ID" value="ENSRNOP00000074204.1"/>
    <property type="gene ID" value="ENSRNOG00000053766.2"/>
</dbReference>
<dbReference type="GeneID" id="56820"/>
<dbReference type="KEGG" id="rno:56820"/>
<dbReference type="UCSC" id="RGD:61873">
    <property type="organism name" value="rat"/>
</dbReference>
<dbReference type="AGR" id="RGD:61873"/>
<dbReference type="CTD" id="10268"/>
<dbReference type="RGD" id="61873">
    <property type="gene designation" value="Ramp3"/>
</dbReference>
<dbReference type="eggNOG" id="ENOG502S3C2">
    <property type="taxonomic scope" value="Eukaryota"/>
</dbReference>
<dbReference type="GeneTree" id="ENSGT00940000161026"/>
<dbReference type="HOGENOM" id="CLU_116349_3_1_1"/>
<dbReference type="InParanoid" id="Q9JJ73"/>
<dbReference type="OrthoDB" id="49369at9989"/>
<dbReference type="PhylomeDB" id="Q9JJ73"/>
<dbReference type="TreeFam" id="TF333286"/>
<dbReference type="Reactome" id="R-RNO-419812">
    <property type="pathway name" value="Calcitonin-like ligand receptors"/>
</dbReference>
<dbReference type="PRO" id="PR:Q9JJ73"/>
<dbReference type="Proteomes" id="UP000002494">
    <property type="component" value="Chromosome 14"/>
</dbReference>
<dbReference type="Bgee" id="ENSRNOG00000053766">
    <property type="expression patterns" value="Expressed in adult mammalian kidney and 18 other cell types or tissues"/>
</dbReference>
<dbReference type="GO" id="GO:1903143">
    <property type="term" value="C:adrenomedullin receptor complex"/>
    <property type="evidence" value="ECO:0000266"/>
    <property type="project" value="RGD"/>
</dbReference>
<dbReference type="GO" id="GO:0150058">
    <property type="term" value="C:amylin receptor complex 3"/>
    <property type="evidence" value="ECO:0000266"/>
    <property type="project" value="RGD"/>
</dbReference>
<dbReference type="GO" id="GO:0009986">
    <property type="term" value="C:cell surface"/>
    <property type="evidence" value="ECO:0000266"/>
    <property type="project" value="RGD"/>
</dbReference>
<dbReference type="GO" id="GO:0005764">
    <property type="term" value="C:lysosome"/>
    <property type="evidence" value="ECO:0000266"/>
    <property type="project" value="RGD"/>
</dbReference>
<dbReference type="GO" id="GO:0005886">
    <property type="term" value="C:plasma membrane"/>
    <property type="evidence" value="ECO:0000250"/>
    <property type="project" value="UniProtKB"/>
</dbReference>
<dbReference type="GO" id="GO:0043235">
    <property type="term" value="C:receptor complex"/>
    <property type="evidence" value="ECO:0000266"/>
    <property type="project" value="RGD"/>
</dbReference>
<dbReference type="GO" id="GO:0001605">
    <property type="term" value="F:adrenomedullin receptor activity"/>
    <property type="evidence" value="ECO:0000266"/>
    <property type="project" value="RGD"/>
</dbReference>
<dbReference type="GO" id="GO:0097643">
    <property type="term" value="F:amylin receptor activity"/>
    <property type="evidence" value="ECO:0000266"/>
    <property type="project" value="RGD"/>
</dbReference>
<dbReference type="GO" id="GO:0015026">
    <property type="term" value="F:coreceptor activity"/>
    <property type="evidence" value="ECO:0000314"/>
    <property type="project" value="RGD"/>
</dbReference>
<dbReference type="GO" id="GO:0001664">
    <property type="term" value="F:G protein-coupled receptor binding"/>
    <property type="evidence" value="ECO:0000303"/>
    <property type="project" value="RGD"/>
</dbReference>
<dbReference type="GO" id="GO:0007189">
    <property type="term" value="P:adenylate cyclase-activating G protein-coupled receptor signaling pathway"/>
    <property type="evidence" value="ECO:0000266"/>
    <property type="project" value="RGD"/>
</dbReference>
<dbReference type="GO" id="GO:1990410">
    <property type="term" value="P:adrenomedullin receptor signaling pathway"/>
    <property type="evidence" value="ECO:0000266"/>
    <property type="project" value="RGD"/>
</dbReference>
<dbReference type="GO" id="GO:0150061">
    <property type="term" value="P:amylin receptor 3 signaling pathway"/>
    <property type="evidence" value="ECO:0000266"/>
    <property type="project" value="RGD"/>
</dbReference>
<dbReference type="GO" id="GO:0097647">
    <property type="term" value="P:amylin receptor signaling pathway"/>
    <property type="evidence" value="ECO:0000266"/>
    <property type="project" value="RGD"/>
</dbReference>
<dbReference type="GO" id="GO:0006816">
    <property type="term" value="P:calcium ion transport"/>
    <property type="evidence" value="ECO:0000266"/>
    <property type="project" value="RGD"/>
</dbReference>
<dbReference type="GO" id="GO:0071392">
    <property type="term" value="P:cellular response to estradiol stimulus"/>
    <property type="evidence" value="ECO:0000250"/>
    <property type="project" value="UniProtKB"/>
</dbReference>
<dbReference type="GO" id="GO:0032870">
    <property type="term" value="P:cellular response to hormone stimulus"/>
    <property type="evidence" value="ECO:0000318"/>
    <property type="project" value="GO_Central"/>
</dbReference>
<dbReference type="GO" id="GO:0007186">
    <property type="term" value="P:G protein-coupled receptor signaling pathway"/>
    <property type="evidence" value="ECO:0000266"/>
    <property type="project" value="RGD"/>
</dbReference>
<dbReference type="GO" id="GO:0086103">
    <property type="term" value="P:G protein-coupled receptor signaling pathway involved in heart process"/>
    <property type="evidence" value="ECO:0000250"/>
    <property type="project" value="UniProtKB"/>
</dbReference>
<dbReference type="GO" id="GO:0006886">
    <property type="term" value="P:intracellular protein transport"/>
    <property type="evidence" value="ECO:0007669"/>
    <property type="project" value="InterPro"/>
</dbReference>
<dbReference type="GO" id="GO:0050850">
    <property type="term" value="P:positive regulation of calcium-mediated signaling"/>
    <property type="evidence" value="ECO:0000266"/>
    <property type="project" value="RGD"/>
</dbReference>
<dbReference type="GO" id="GO:0141163">
    <property type="term" value="P:positive regulation of cAMP/PKA signal transduction"/>
    <property type="evidence" value="ECO:0000266"/>
    <property type="project" value="RGD"/>
</dbReference>
<dbReference type="GO" id="GO:0070374">
    <property type="term" value="P:positive regulation of ERK1 and ERK2 cascade"/>
    <property type="evidence" value="ECO:0000266"/>
    <property type="project" value="RGD"/>
</dbReference>
<dbReference type="GO" id="GO:0010628">
    <property type="term" value="P:positive regulation of gene expression"/>
    <property type="evidence" value="ECO:0000266"/>
    <property type="project" value="RGD"/>
</dbReference>
<dbReference type="GO" id="GO:0051897">
    <property type="term" value="P:positive regulation of phosphatidylinositol 3-kinase/protein kinase B signal transduction"/>
    <property type="evidence" value="ECO:0000266"/>
    <property type="project" value="RGD"/>
</dbReference>
<dbReference type="GO" id="GO:1903078">
    <property type="term" value="P:positive regulation of protein localization to plasma membrane"/>
    <property type="evidence" value="ECO:0000250"/>
    <property type="project" value="UniProtKB"/>
</dbReference>
<dbReference type="GO" id="GO:0001921">
    <property type="term" value="P:positive regulation of receptor recycling"/>
    <property type="evidence" value="ECO:0000266"/>
    <property type="project" value="RGD"/>
</dbReference>
<dbReference type="GO" id="GO:0072659">
    <property type="term" value="P:protein localization to plasma membrane"/>
    <property type="evidence" value="ECO:0000266"/>
    <property type="project" value="RGD"/>
</dbReference>
<dbReference type="GO" id="GO:0015031">
    <property type="term" value="P:protein transport"/>
    <property type="evidence" value="ECO:0000266"/>
    <property type="project" value="RGD"/>
</dbReference>
<dbReference type="GO" id="GO:0031623">
    <property type="term" value="P:receptor internalization"/>
    <property type="evidence" value="ECO:0000266"/>
    <property type="project" value="RGD"/>
</dbReference>
<dbReference type="GO" id="GO:0008277">
    <property type="term" value="P:regulation of G protein-coupled receptor signaling pathway"/>
    <property type="evidence" value="ECO:0007669"/>
    <property type="project" value="InterPro"/>
</dbReference>
<dbReference type="GO" id="GO:1904645">
    <property type="term" value="P:response to amyloid-beta"/>
    <property type="evidence" value="ECO:0000266"/>
    <property type="project" value="RGD"/>
</dbReference>
<dbReference type="FunFam" id="1.10.150.510:FF:000001">
    <property type="entry name" value="Receptor activity modifying protein 3"/>
    <property type="match status" value="1"/>
</dbReference>
<dbReference type="Gene3D" id="1.10.150.510">
    <property type="entry name" value="Receptor activity modifying family"/>
    <property type="match status" value="1"/>
</dbReference>
<dbReference type="InterPro" id="IPR006985">
    <property type="entry name" value="RAMP"/>
</dbReference>
<dbReference type="InterPro" id="IPR038126">
    <property type="entry name" value="RAMP_sf"/>
</dbReference>
<dbReference type="PANTHER" id="PTHR14076">
    <property type="entry name" value="RECEPTOR ACTIVITY MODIFYING PROTEIN RAMP"/>
    <property type="match status" value="1"/>
</dbReference>
<dbReference type="PANTHER" id="PTHR14076:SF2">
    <property type="entry name" value="RECEPTOR ACTIVITY-MODIFYING PROTEIN 3"/>
    <property type="match status" value="1"/>
</dbReference>
<dbReference type="Pfam" id="PF04901">
    <property type="entry name" value="RAMP"/>
    <property type="match status" value="1"/>
</dbReference>
<protein>
    <recommendedName>
        <fullName>Receptor activity-modifying protein 3</fullName>
    </recommendedName>
</protein>
<proteinExistence type="evidence at transcript level"/>
<name>RAMP3_RAT</name>
<gene>
    <name evidence="5" type="primary">Ramp3</name>
</gene>
<sequence length="147" mass="16781">MATPAQRLHLLPLLLLLCGECAQVCGCNETGMLERLPRCGKAFAEMMQKVDVWKWCNLSEFIVYYESFTNCTEMETNIVGCYWPNPLAQSFITGIHRQFFSNCTVDRTHWEDPPDEVLIPLIAVPVLLTVAMAGLVVWRSKRTDRLL</sequence>
<reference key="1">
    <citation type="journal article" date="2001" name="Cardiovasc. Res.">
        <title>Cardiac fibroblasts are major production and target cells of adrenomedullin in the heart in vitro.</title>
        <authorList>
            <person name="Tomoda Y."/>
            <person name="Kikumoto K."/>
            <person name="Isumi Y."/>
            <person name="Katafuchi T."/>
            <person name="Tanaka A."/>
            <person name="Kangawa K."/>
            <person name="Dohi K."/>
            <person name="Minamino N."/>
        </authorList>
    </citation>
    <scope>NUCLEOTIDE SEQUENCE [MRNA]</scope>
    <source>
        <strain>Sprague-Dawley</strain>
        <tissue>Brain</tissue>
    </source>
</reference>
<reference key="2">
    <citation type="journal article" date="2001" name="Eur. J. Neurosci.">
        <title>Cloning, characterization and central nervous system distribution of receptor activity modifying proteins in the rat.</title>
        <authorList>
            <person name="Oliver K.R."/>
            <person name="Kane S.A."/>
            <person name="Salvatore C.A."/>
            <person name="Mallee J.J."/>
            <person name="Kinsey A.M."/>
            <person name="Koblan K.S."/>
            <person name="Keyvan-Fouladi N."/>
            <person name="Heavens R.P."/>
            <person name="Wainwright A."/>
            <person name="Jacobson M."/>
            <person name="Dickerson I.M."/>
            <person name="Hill R.G."/>
        </authorList>
    </citation>
    <scope>NUCLEOTIDE SEQUENCE [MRNA]</scope>
    <scope>FUNCTION</scope>
    <source>
        <strain>Sprague-Dawley</strain>
        <tissue>Heart</tissue>
    </source>
</reference>
<organism>
    <name type="scientific">Rattus norvegicus</name>
    <name type="common">Rat</name>
    <dbReference type="NCBI Taxonomy" id="10116"/>
    <lineage>
        <taxon>Eukaryota</taxon>
        <taxon>Metazoa</taxon>
        <taxon>Chordata</taxon>
        <taxon>Craniata</taxon>
        <taxon>Vertebrata</taxon>
        <taxon>Euteleostomi</taxon>
        <taxon>Mammalia</taxon>
        <taxon>Eutheria</taxon>
        <taxon>Euarchontoglires</taxon>
        <taxon>Glires</taxon>
        <taxon>Rodentia</taxon>
        <taxon>Myomorpha</taxon>
        <taxon>Muroidea</taxon>
        <taxon>Muridae</taxon>
        <taxon>Murinae</taxon>
        <taxon>Rattus</taxon>
    </lineage>
</organism>
<evidence type="ECO:0000250" key="1">
    <source>
        <dbReference type="UniProtKB" id="O60896"/>
    </source>
</evidence>
<evidence type="ECO:0000255" key="2"/>
<evidence type="ECO:0000269" key="3">
    <source>
    </source>
</evidence>
<evidence type="ECO:0000305" key="4"/>
<evidence type="ECO:0000312" key="5">
    <source>
        <dbReference type="RGD" id="61873"/>
    </source>
</evidence>
<comment type="function">
    <text evidence="1 3">Accessory protein that interacts with and modulates the function of G-protein coupled receptors including calcitonin gene-related peptide type 1 receptor (CALCRL), calcitonin receptor (CALCR) and G-protein coupled estrogen receptor 1 (GPER1) (PubMed:11556887). Required for the transport of CALCRL and GPER1 receptors to the plasma membrane. Plays a role in cardioprotection by reducing cardiac hypertrophy and perivascular fibrosis in a GPER1-dependent manner (By similarity). Together with CALCRL, form a receptor complex for adrenomedullin/ADM and intermedin/ADM2 (PubMed:11556887). Together with CALCR, act as a receptor complex for amylin/IAPP (By similarity).</text>
</comment>
<comment type="subunit">
    <text evidence="1">Heterodimer of CALCRL and RAMP3; interaction induces allosteric modulation of CALCRL function and ligand specificity for adrenomedullin/ADM and intermedin/ADM2. Heterodimer of CALCR and RAMP3; interaction form the receptor complex AMYR3 for amylin/IAPP. Interacts with GPER1.</text>
</comment>
<comment type="subcellular location">
    <subcellularLocation>
        <location evidence="1">Cell membrane</location>
        <topology evidence="1">Single-pass type I membrane protein</topology>
    </subcellularLocation>
    <subcellularLocation>
        <location evidence="1">Membrane</location>
        <topology evidence="1">Single-pass type I membrane protein</topology>
    </subcellularLocation>
    <text evidence="1">Moves from intracellular puncta to the plasma membrane in a RAMP3-dependent manner.</text>
</comment>
<comment type="similarity">
    <text evidence="4">Belongs to the RAMP family.</text>
</comment>
<accession>Q9JJ73</accession>
<feature type="signal peptide" evidence="2">
    <location>
        <begin position="1"/>
        <end position="22"/>
    </location>
</feature>
<feature type="chain" id="PRO_0000030178" description="Receptor activity-modifying protein 3">
    <location>
        <begin position="23"/>
        <end position="147"/>
    </location>
</feature>
<feature type="topological domain" description="Extracellular" evidence="2">
    <location>
        <begin position="23"/>
        <end position="112"/>
    </location>
</feature>
<feature type="transmembrane region" description="Helical" evidence="1">
    <location>
        <begin position="113"/>
        <end position="137"/>
    </location>
</feature>
<feature type="topological domain" description="Cytoplasmic" evidence="2">
    <location>
        <begin position="138"/>
        <end position="147"/>
    </location>
</feature>
<feature type="site" description="Required for CALCRL interaction" evidence="1">
    <location>
        <position position="112"/>
    </location>
</feature>
<feature type="site" description="Required for CALCRL interaction" evidence="1">
    <location>
        <position position="140"/>
    </location>
</feature>
<feature type="glycosylation site" description="N-linked (GlcNAc...) asparagine" evidence="2">
    <location>
        <position position="28"/>
    </location>
</feature>
<feature type="glycosylation site" description="N-linked (GlcNAc...) asparagine" evidence="2">
    <location>
        <position position="57"/>
    </location>
</feature>
<feature type="glycosylation site" description="N-linked (GlcNAc...) asparagine" evidence="2">
    <location>
        <position position="70"/>
    </location>
</feature>
<feature type="glycosylation site" description="N-linked (GlcNAc...) asparagine" evidence="2">
    <location>
        <position position="102"/>
    </location>
</feature>
<feature type="disulfide bond" evidence="1">
    <location>
        <begin position="39"/>
        <end position="71"/>
    </location>
</feature>
<feature type="disulfide bond" evidence="1">
    <location>
        <begin position="56"/>
        <end position="103"/>
    </location>
</feature>
<keyword id="KW-1003">Cell membrane</keyword>
<keyword id="KW-1015">Disulfide bond</keyword>
<keyword id="KW-0325">Glycoprotein</keyword>
<keyword id="KW-0472">Membrane</keyword>
<keyword id="KW-0675">Receptor</keyword>
<keyword id="KW-1185">Reference proteome</keyword>
<keyword id="KW-0732">Signal</keyword>
<keyword id="KW-0812">Transmembrane</keyword>
<keyword id="KW-1133">Transmembrane helix</keyword>
<keyword id="KW-0813">Transport</keyword>